<sequence>MGTISLCIGVCAFEGANTSTSFYKLVYTAILSYSIQDLLPEQDMKDLCQKVTLTRHRSWGLDNLHLVKDWRTVNEGKGQKEYCNRLTQCSSTKSKIFQCIECGRNFSWRSILTEHKRIHTGEKPYKCEECGKVFNRCSNLTKHKRIHTGEKPYKCDECGKVFNWWSQLTNHKKIHTGEKPYKCDECDKVFNWWSQLTSHKKIHSGEKPYPCEECGKAFTQFSNLTQHKRIHTGEKPYKCKECCKAFNKFSNLTQHKRIHTGEKPYKCEECGNVFNECSHLTRHRRIHTGEKPYKCEECGKAFTQFASLTRHKRIHTGEKPYQCEECGKTFNRCSHLSSHKRIHTGEKPYKCEECGRTFTQFSNLTQHKRIHTGEKPYKCKECGKAFNKFSSLTQHRRIHTGVKPYKCEECGKVFKQCSHLTSHKRIHTGEKPYKCKECGKAFYQSSILSKHKRIHTEEKPYKCEECGKAFNQFSSLTRHKRIHTGEKRYKCKECGKGFYQSSIHSKYKRIYTGEEPDKCKKCGSL</sequence>
<feature type="chain" id="PRO_0000233998" description="Zinc finger protein 678">
    <location>
        <begin position="1"/>
        <end position="525"/>
    </location>
</feature>
<feature type="zinc finger region" description="C2H2-type 1" evidence="1">
    <location>
        <begin position="97"/>
        <end position="119"/>
    </location>
</feature>
<feature type="zinc finger region" description="C2H2-type 2" evidence="1">
    <location>
        <begin position="125"/>
        <end position="147"/>
    </location>
</feature>
<feature type="zinc finger region" description="C2H2-type 3" evidence="1">
    <location>
        <begin position="153"/>
        <end position="175"/>
    </location>
</feature>
<feature type="zinc finger region" description="C2H2-type 4" evidence="1">
    <location>
        <begin position="181"/>
        <end position="203"/>
    </location>
</feature>
<feature type="zinc finger region" description="C2H2-type 5" evidence="1">
    <location>
        <begin position="209"/>
        <end position="231"/>
    </location>
</feature>
<feature type="zinc finger region" description="C2H2-type 6" evidence="1">
    <location>
        <begin position="237"/>
        <end position="259"/>
    </location>
</feature>
<feature type="zinc finger region" description="C2H2-type 7" evidence="1">
    <location>
        <begin position="265"/>
        <end position="287"/>
    </location>
</feature>
<feature type="zinc finger region" description="C2H2-type 8" evidence="1">
    <location>
        <begin position="293"/>
        <end position="315"/>
    </location>
</feature>
<feature type="zinc finger region" description="C2H2-type 9" evidence="1">
    <location>
        <begin position="321"/>
        <end position="343"/>
    </location>
</feature>
<feature type="zinc finger region" description="C2H2-type 10" evidence="1">
    <location>
        <begin position="349"/>
        <end position="371"/>
    </location>
</feature>
<feature type="zinc finger region" description="C2H2-type 11" evidence="1">
    <location>
        <begin position="377"/>
        <end position="399"/>
    </location>
</feature>
<feature type="zinc finger region" description="C2H2-type 12" evidence="1">
    <location>
        <begin position="405"/>
        <end position="427"/>
    </location>
</feature>
<feature type="zinc finger region" description="C2H2-type 13" evidence="1">
    <location>
        <begin position="433"/>
        <end position="455"/>
    </location>
</feature>
<feature type="zinc finger region" description="C2H2-type 14" evidence="1">
    <location>
        <begin position="461"/>
        <end position="483"/>
    </location>
</feature>
<feature type="zinc finger region" description="C2H2-type 15; degenerate" evidence="1">
    <location>
        <begin position="489"/>
        <end position="511"/>
    </location>
</feature>
<feature type="sequence variant" id="VAR_026154" description="In dbSNP:rs17854209." evidence="2">
    <original>K</original>
    <variation>E</variation>
    <location>
        <position position="144"/>
    </location>
</feature>
<feature type="sequence variant" id="VAR_061962" description="In dbSNP:rs61283390.">
    <original>P</original>
    <variation>T</variation>
    <location>
        <position position="152"/>
    </location>
</feature>
<feature type="sequence variant" id="VAR_057441" description="In dbSNP:rs12118505.">
    <original>T</original>
    <variation>I</variation>
    <location>
        <position position="197"/>
    </location>
</feature>
<accession>Q5SXM1</accession>
<accession>Q8IVQ9</accession>
<dbReference type="EMBL" id="AL592310">
    <property type="status" value="NOT_ANNOTATED_CDS"/>
    <property type="molecule type" value="Genomic_DNA"/>
</dbReference>
<dbReference type="EMBL" id="BC042500">
    <property type="protein sequence ID" value="AAH42500.1"/>
    <property type="molecule type" value="mRNA"/>
</dbReference>
<dbReference type="CCDS" id="CCDS1560.1"/>
<dbReference type="RefSeq" id="NP_001354838.1">
    <property type="nucleotide sequence ID" value="NM_001367909.1"/>
</dbReference>
<dbReference type="RefSeq" id="NP_001354839.1">
    <property type="nucleotide sequence ID" value="NM_001367910.1"/>
</dbReference>
<dbReference type="SMR" id="Q5SXM1"/>
<dbReference type="FunCoup" id="Q5SXM1">
    <property type="interactions" value="51"/>
</dbReference>
<dbReference type="IntAct" id="Q5SXM1">
    <property type="interactions" value="2"/>
</dbReference>
<dbReference type="STRING" id="9606.ENSP00000344828"/>
<dbReference type="GlyGen" id="Q5SXM1">
    <property type="glycosylation" value="3 sites, 2 N-linked glycans (3 sites)"/>
</dbReference>
<dbReference type="iPTMnet" id="Q5SXM1"/>
<dbReference type="PhosphoSitePlus" id="Q5SXM1"/>
<dbReference type="BioMuta" id="ZNF678"/>
<dbReference type="DMDM" id="74756138"/>
<dbReference type="jPOST" id="Q5SXM1"/>
<dbReference type="MassIVE" id="Q5SXM1"/>
<dbReference type="PaxDb" id="9606-ENSP00000344828"/>
<dbReference type="PeptideAtlas" id="Q5SXM1"/>
<dbReference type="Antibodypedia" id="34656">
    <property type="antibodies" value="71 antibodies from 11 providers"/>
</dbReference>
<dbReference type="Ensembl" id="ENST00000343776.10">
    <property type="protein sequence ID" value="ENSP00000344828.4"/>
    <property type="gene ID" value="ENSG00000181450.18"/>
</dbReference>
<dbReference type="Ensembl" id="ENST00000397097.4">
    <property type="protein sequence ID" value="ENSP00000440403.2"/>
    <property type="gene ID" value="ENSG00000181450.18"/>
</dbReference>
<dbReference type="GeneID" id="339500"/>
<dbReference type="MANE-Select" id="ENST00000343776.10">
    <property type="protein sequence ID" value="ENSP00000344828.4"/>
    <property type="RefSeq nucleotide sequence ID" value="NM_001367909.1"/>
    <property type="RefSeq protein sequence ID" value="NP_001354838.1"/>
</dbReference>
<dbReference type="UCSC" id="uc001hqw.3">
    <property type="organism name" value="human"/>
</dbReference>
<dbReference type="AGR" id="HGNC:28652"/>
<dbReference type="GeneCards" id="ZNF678"/>
<dbReference type="HGNC" id="HGNC:28652">
    <property type="gene designation" value="ZNF678"/>
</dbReference>
<dbReference type="HPA" id="ENSG00000181450">
    <property type="expression patterns" value="Low tissue specificity"/>
</dbReference>
<dbReference type="neXtProt" id="NX_Q5SXM1"/>
<dbReference type="OpenTargets" id="ENSG00000181450"/>
<dbReference type="VEuPathDB" id="HostDB:ENSG00000181450"/>
<dbReference type="eggNOG" id="KOG1721">
    <property type="taxonomic scope" value="Eukaryota"/>
</dbReference>
<dbReference type="GeneTree" id="ENSGT00940000154251"/>
<dbReference type="HOGENOM" id="CLU_002678_44_0_1"/>
<dbReference type="InParanoid" id="Q5SXM1"/>
<dbReference type="OMA" id="CYNRLTH"/>
<dbReference type="OrthoDB" id="6591996at2759"/>
<dbReference type="PAN-GO" id="Q5SXM1">
    <property type="GO annotations" value="3 GO annotations based on evolutionary models"/>
</dbReference>
<dbReference type="PhylomeDB" id="Q5SXM1"/>
<dbReference type="TreeFam" id="TF341817"/>
<dbReference type="PathwayCommons" id="Q5SXM1"/>
<dbReference type="Reactome" id="R-HSA-212436">
    <property type="pathway name" value="Generic Transcription Pathway"/>
</dbReference>
<dbReference type="SignaLink" id="Q5SXM1"/>
<dbReference type="ChiTaRS" id="ZNF678">
    <property type="organism name" value="human"/>
</dbReference>
<dbReference type="Pharos" id="Q5SXM1">
    <property type="development level" value="Tdark"/>
</dbReference>
<dbReference type="PRO" id="PR:Q5SXM1"/>
<dbReference type="Proteomes" id="UP000005640">
    <property type="component" value="Chromosome 1"/>
</dbReference>
<dbReference type="RNAct" id="Q5SXM1">
    <property type="molecule type" value="protein"/>
</dbReference>
<dbReference type="Bgee" id="ENSG00000181450">
    <property type="expression patterns" value="Expressed in male germ line stem cell (sensu Vertebrata) in testis and 180 other cell types or tissues"/>
</dbReference>
<dbReference type="ExpressionAtlas" id="Q5SXM1">
    <property type="expression patterns" value="baseline and differential"/>
</dbReference>
<dbReference type="GO" id="GO:0005634">
    <property type="term" value="C:nucleus"/>
    <property type="evidence" value="ECO:0007669"/>
    <property type="project" value="UniProtKB-SubCell"/>
</dbReference>
<dbReference type="GO" id="GO:0000981">
    <property type="term" value="F:DNA-binding transcription factor activity, RNA polymerase II-specific"/>
    <property type="evidence" value="ECO:0000318"/>
    <property type="project" value="GO_Central"/>
</dbReference>
<dbReference type="GO" id="GO:0000978">
    <property type="term" value="F:RNA polymerase II cis-regulatory region sequence-specific DNA binding"/>
    <property type="evidence" value="ECO:0000318"/>
    <property type="project" value="GO_Central"/>
</dbReference>
<dbReference type="GO" id="GO:0008270">
    <property type="term" value="F:zinc ion binding"/>
    <property type="evidence" value="ECO:0007669"/>
    <property type="project" value="UniProtKB-KW"/>
</dbReference>
<dbReference type="GO" id="GO:0006355">
    <property type="term" value="P:regulation of DNA-templated transcription"/>
    <property type="evidence" value="ECO:0000318"/>
    <property type="project" value="GO_Central"/>
</dbReference>
<dbReference type="FunFam" id="3.30.160.60:FF:000258">
    <property type="entry name" value="zinc finger and SCAN domain-containing protein 29 isoform X2"/>
    <property type="match status" value="1"/>
</dbReference>
<dbReference type="FunFam" id="3.30.160.60:FF:001737">
    <property type="entry name" value="Zinc finger protein 100"/>
    <property type="match status" value="2"/>
</dbReference>
<dbReference type="FunFam" id="3.30.160.60:FF:003265">
    <property type="entry name" value="Zinc finger protein 1012"/>
    <property type="match status" value="1"/>
</dbReference>
<dbReference type="FunFam" id="3.30.160.60:FF:000688">
    <property type="entry name" value="zinc finger protein 197 isoform X1"/>
    <property type="match status" value="1"/>
</dbReference>
<dbReference type="FunFam" id="3.30.160.60:FF:000034">
    <property type="entry name" value="zinc finger protein 25"/>
    <property type="match status" value="2"/>
</dbReference>
<dbReference type="FunFam" id="3.30.160.60:FF:001868">
    <property type="entry name" value="Zinc finger protein 264"/>
    <property type="match status" value="3"/>
</dbReference>
<dbReference type="FunFam" id="3.30.160.60:FF:000238">
    <property type="entry name" value="Zinc finger protein 485"/>
    <property type="match status" value="2"/>
</dbReference>
<dbReference type="FunFam" id="3.30.160.60:FF:002254">
    <property type="entry name" value="Zinc finger protein 540"/>
    <property type="match status" value="3"/>
</dbReference>
<dbReference type="Gene3D" id="3.30.160.60">
    <property type="entry name" value="Classic Zinc Finger"/>
    <property type="match status" value="15"/>
</dbReference>
<dbReference type="InterPro" id="IPR036236">
    <property type="entry name" value="Znf_C2H2_sf"/>
</dbReference>
<dbReference type="InterPro" id="IPR013087">
    <property type="entry name" value="Znf_C2H2_type"/>
</dbReference>
<dbReference type="PANTHER" id="PTHR24376">
    <property type="entry name" value="ZINC FINGER PROTEIN"/>
    <property type="match status" value="1"/>
</dbReference>
<dbReference type="PANTHER" id="PTHR24376:SF210">
    <property type="entry name" value="ZINC FINGER PROTEIN 721-RELATED"/>
    <property type="match status" value="1"/>
</dbReference>
<dbReference type="Pfam" id="PF00096">
    <property type="entry name" value="zf-C2H2"/>
    <property type="match status" value="8"/>
</dbReference>
<dbReference type="Pfam" id="PF13912">
    <property type="entry name" value="zf-C2H2_6"/>
    <property type="match status" value="1"/>
</dbReference>
<dbReference type="Pfam" id="PF13465">
    <property type="entry name" value="zf-H2C2_2"/>
    <property type="match status" value="2"/>
</dbReference>
<dbReference type="SMART" id="SM00355">
    <property type="entry name" value="ZnF_C2H2"/>
    <property type="match status" value="14"/>
</dbReference>
<dbReference type="SUPFAM" id="SSF57667">
    <property type="entry name" value="beta-beta-alpha zinc fingers"/>
    <property type="match status" value="8"/>
</dbReference>
<dbReference type="PROSITE" id="PS00028">
    <property type="entry name" value="ZINC_FINGER_C2H2_1"/>
    <property type="match status" value="14"/>
</dbReference>
<dbReference type="PROSITE" id="PS50157">
    <property type="entry name" value="ZINC_FINGER_C2H2_2"/>
    <property type="match status" value="15"/>
</dbReference>
<protein>
    <recommendedName>
        <fullName>Zinc finger protein 678</fullName>
    </recommendedName>
</protein>
<gene>
    <name type="primary">ZNF678</name>
</gene>
<name>ZN678_HUMAN</name>
<comment type="function">
    <text>May be involved in transcriptional regulation.</text>
</comment>
<comment type="subcellular location">
    <subcellularLocation>
        <location evidence="3">Nucleus</location>
    </subcellularLocation>
</comment>
<comment type="similarity">
    <text evidence="3">Belongs to the krueppel C2H2-type zinc-finger protein family.</text>
</comment>
<organism>
    <name type="scientific">Homo sapiens</name>
    <name type="common">Human</name>
    <dbReference type="NCBI Taxonomy" id="9606"/>
    <lineage>
        <taxon>Eukaryota</taxon>
        <taxon>Metazoa</taxon>
        <taxon>Chordata</taxon>
        <taxon>Craniata</taxon>
        <taxon>Vertebrata</taxon>
        <taxon>Euteleostomi</taxon>
        <taxon>Mammalia</taxon>
        <taxon>Eutheria</taxon>
        <taxon>Euarchontoglires</taxon>
        <taxon>Primates</taxon>
        <taxon>Haplorrhini</taxon>
        <taxon>Catarrhini</taxon>
        <taxon>Hominidae</taxon>
        <taxon>Homo</taxon>
    </lineage>
</organism>
<evidence type="ECO:0000255" key="1">
    <source>
        <dbReference type="PROSITE-ProRule" id="PRU00042"/>
    </source>
</evidence>
<evidence type="ECO:0000269" key="2">
    <source>
    </source>
</evidence>
<evidence type="ECO:0000305" key="3"/>
<reference key="1">
    <citation type="journal article" date="2006" name="Nature">
        <title>The DNA sequence and biological annotation of human chromosome 1.</title>
        <authorList>
            <person name="Gregory S.G."/>
            <person name="Barlow K.F."/>
            <person name="McLay K.E."/>
            <person name="Kaul R."/>
            <person name="Swarbreck D."/>
            <person name="Dunham A."/>
            <person name="Scott C.E."/>
            <person name="Howe K.L."/>
            <person name="Woodfine K."/>
            <person name="Spencer C.C.A."/>
            <person name="Jones M.C."/>
            <person name="Gillson C."/>
            <person name="Searle S."/>
            <person name="Zhou Y."/>
            <person name="Kokocinski F."/>
            <person name="McDonald L."/>
            <person name="Evans R."/>
            <person name="Phillips K."/>
            <person name="Atkinson A."/>
            <person name="Cooper R."/>
            <person name="Jones C."/>
            <person name="Hall R.E."/>
            <person name="Andrews T.D."/>
            <person name="Lloyd C."/>
            <person name="Ainscough R."/>
            <person name="Almeida J.P."/>
            <person name="Ambrose K.D."/>
            <person name="Anderson F."/>
            <person name="Andrew R.W."/>
            <person name="Ashwell R.I.S."/>
            <person name="Aubin K."/>
            <person name="Babbage A.K."/>
            <person name="Bagguley C.L."/>
            <person name="Bailey J."/>
            <person name="Beasley H."/>
            <person name="Bethel G."/>
            <person name="Bird C.P."/>
            <person name="Bray-Allen S."/>
            <person name="Brown J.Y."/>
            <person name="Brown A.J."/>
            <person name="Buckley D."/>
            <person name="Burton J."/>
            <person name="Bye J."/>
            <person name="Carder C."/>
            <person name="Chapman J.C."/>
            <person name="Clark S.Y."/>
            <person name="Clarke G."/>
            <person name="Clee C."/>
            <person name="Cobley V."/>
            <person name="Collier R.E."/>
            <person name="Corby N."/>
            <person name="Coville G.J."/>
            <person name="Davies J."/>
            <person name="Deadman R."/>
            <person name="Dunn M."/>
            <person name="Earthrowl M."/>
            <person name="Ellington A.G."/>
            <person name="Errington H."/>
            <person name="Frankish A."/>
            <person name="Frankland J."/>
            <person name="French L."/>
            <person name="Garner P."/>
            <person name="Garnett J."/>
            <person name="Gay L."/>
            <person name="Ghori M.R.J."/>
            <person name="Gibson R."/>
            <person name="Gilby L.M."/>
            <person name="Gillett W."/>
            <person name="Glithero R.J."/>
            <person name="Grafham D.V."/>
            <person name="Griffiths C."/>
            <person name="Griffiths-Jones S."/>
            <person name="Grocock R."/>
            <person name="Hammond S."/>
            <person name="Harrison E.S.I."/>
            <person name="Hart E."/>
            <person name="Haugen E."/>
            <person name="Heath P.D."/>
            <person name="Holmes S."/>
            <person name="Holt K."/>
            <person name="Howden P.J."/>
            <person name="Hunt A.R."/>
            <person name="Hunt S.E."/>
            <person name="Hunter G."/>
            <person name="Isherwood J."/>
            <person name="James R."/>
            <person name="Johnson C."/>
            <person name="Johnson D."/>
            <person name="Joy A."/>
            <person name="Kay M."/>
            <person name="Kershaw J.K."/>
            <person name="Kibukawa M."/>
            <person name="Kimberley A.M."/>
            <person name="King A."/>
            <person name="Knights A.J."/>
            <person name="Lad H."/>
            <person name="Laird G."/>
            <person name="Lawlor S."/>
            <person name="Leongamornlert D.A."/>
            <person name="Lloyd D.M."/>
            <person name="Loveland J."/>
            <person name="Lovell J."/>
            <person name="Lush M.J."/>
            <person name="Lyne R."/>
            <person name="Martin S."/>
            <person name="Mashreghi-Mohammadi M."/>
            <person name="Matthews L."/>
            <person name="Matthews N.S.W."/>
            <person name="McLaren S."/>
            <person name="Milne S."/>
            <person name="Mistry S."/>
            <person name="Moore M.J.F."/>
            <person name="Nickerson T."/>
            <person name="O'Dell C.N."/>
            <person name="Oliver K."/>
            <person name="Palmeiri A."/>
            <person name="Palmer S.A."/>
            <person name="Parker A."/>
            <person name="Patel D."/>
            <person name="Pearce A.V."/>
            <person name="Peck A.I."/>
            <person name="Pelan S."/>
            <person name="Phelps K."/>
            <person name="Phillimore B.J."/>
            <person name="Plumb R."/>
            <person name="Rajan J."/>
            <person name="Raymond C."/>
            <person name="Rouse G."/>
            <person name="Saenphimmachak C."/>
            <person name="Sehra H.K."/>
            <person name="Sheridan E."/>
            <person name="Shownkeen R."/>
            <person name="Sims S."/>
            <person name="Skuce C.D."/>
            <person name="Smith M."/>
            <person name="Steward C."/>
            <person name="Subramanian S."/>
            <person name="Sycamore N."/>
            <person name="Tracey A."/>
            <person name="Tromans A."/>
            <person name="Van Helmond Z."/>
            <person name="Wall M."/>
            <person name="Wallis J.M."/>
            <person name="White S."/>
            <person name="Whitehead S.L."/>
            <person name="Wilkinson J.E."/>
            <person name="Willey D.L."/>
            <person name="Williams H."/>
            <person name="Wilming L."/>
            <person name="Wray P.W."/>
            <person name="Wu Z."/>
            <person name="Coulson A."/>
            <person name="Vaudin M."/>
            <person name="Sulston J.E."/>
            <person name="Durbin R.M."/>
            <person name="Hubbard T."/>
            <person name="Wooster R."/>
            <person name="Dunham I."/>
            <person name="Carter N.P."/>
            <person name="McVean G."/>
            <person name="Ross M.T."/>
            <person name="Harrow J."/>
            <person name="Olson M.V."/>
            <person name="Beck S."/>
            <person name="Rogers J."/>
            <person name="Bentley D.R."/>
        </authorList>
    </citation>
    <scope>NUCLEOTIDE SEQUENCE [LARGE SCALE GENOMIC DNA]</scope>
</reference>
<reference key="2">
    <citation type="journal article" date="2004" name="Genome Res.">
        <title>The status, quality, and expansion of the NIH full-length cDNA project: the Mammalian Gene Collection (MGC).</title>
        <authorList>
            <consortium name="The MGC Project Team"/>
        </authorList>
    </citation>
    <scope>NUCLEOTIDE SEQUENCE [LARGE SCALE MRNA]</scope>
    <scope>VARIANT GLU-144</scope>
    <source>
        <tissue>Testis</tissue>
    </source>
</reference>
<keyword id="KW-0238">DNA-binding</keyword>
<keyword id="KW-0479">Metal-binding</keyword>
<keyword id="KW-0539">Nucleus</keyword>
<keyword id="KW-1267">Proteomics identification</keyword>
<keyword id="KW-1185">Reference proteome</keyword>
<keyword id="KW-0677">Repeat</keyword>
<keyword id="KW-0804">Transcription</keyword>
<keyword id="KW-0805">Transcription regulation</keyword>
<keyword id="KW-0862">Zinc</keyword>
<keyword id="KW-0863">Zinc-finger</keyword>
<proteinExistence type="evidence at protein level"/>